<keyword id="KW-0131">Cell cycle</keyword>
<keyword id="KW-0132">Cell division</keyword>
<keyword id="KW-0963">Cytoplasm</keyword>
<keyword id="KW-0238">DNA-binding</keyword>
<keyword id="KW-1185">Reference proteome</keyword>
<name>MATP_VIBCH</name>
<protein>
    <recommendedName>
        <fullName evidence="1">Macrodomain Ter protein</fullName>
    </recommendedName>
</protein>
<evidence type="ECO:0000255" key="1">
    <source>
        <dbReference type="HAMAP-Rule" id="MF_01073"/>
    </source>
</evidence>
<evidence type="ECO:0000305" key="2"/>
<organism>
    <name type="scientific">Vibrio cholerae serotype O1 (strain ATCC 39315 / El Tor Inaba N16961)</name>
    <dbReference type="NCBI Taxonomy" id="243277"/>
    <lineage>
        <taxon>Bacteria</taxon>
        <taxon>Pseudomonadati</taxon>
        <taxon>Pseudomonadota</taxon>
        <taxon>Gammaproteobacteria</taxon>
        <taxon>Vibrionales</taxon>
        <taxon>Vibrionaceae</taxon>
        <taxon>Vibrio</taxon>
    </lineage>
</organism>
<feature type="chain" id="PRO_0000070358" description="Macrodomain Ter protein">
    <location>
        <begin position="1"/>
        <end position="149"/>
    </location>
</feature>
<sequence length="149" mass="17570">MKYQQLENLECGWKWQYLINKWKDGEPVTRYIDKSEIEAAVQKLRAIEHEPTHVLSWIEEHMSSELDNKLKQAIRAKRKRHFNAEQIHTRKKSIDLDYRVWEKLSLKANELGCTLSDAIEYLLSEASRSEKASKTVNSLKEDLSRLLAE</sequence>
<reference key="1">
    <citation type="journal article" date="2000" name="Nature">
        <title>DNA sequence of both chromosomes of the cholera pathogen Vibrio cholerae.</title>
        <authorList>
            <person name="Heidelberg J.F."/>
            <person name="Eisen J.A."/>
            <person name="Nelson W.C."/>
            <person name="Clayton R.A."/>
            <person name="Gwinn M.L."/>
            <person name="Dodson R.J."/>
            <person name="Haft D.H."/>
            <person name="Hickey E.K."/>
            <person name="Peterson J.D."/>
            <person name="Umayam L.A."/>
            <person name="Gill S.R."/>
            <person name="Nelson K.E."/>
            <person name="Read T.D."/>
            <person name="Tettelin H."/>
            <person name="Richardson D.L."/>
            <person name="Ermolaeva M.D."/>
            <person name="Vamathevan J.J."/>
            <person name="Bass S."/>
            <person name="Qin H."/>
            <person name="Dragoi I."/>
            <person name="Sellers P."/>
            <person name="McDonald L.A."/>
            <person name="Utterback T.R."/>
            <person name="Fleischmann R.D."/>
            <person name="Nierman W.C."/>
            <person name="White O."/>
            <person name="Salzberg S.L."/>
            <person name="Smith H.O."/>
            <person name="Colwell R.R."/>
            <person name="Mekalanos J.J."/>
            <person name="Venter J.C."/>
            <person name="Fraser C.M."/>
        </authorList>
    </citation>
    <scope>NUCLEOTIDE SEQUENCE [LARGE SCALE GENOMIC DNA]</scope>
    <source>
        <strain>ATCC 39315 / El Tor Inaba N16961</strain>
    </source>
</reference>
<proteinExistence type="inferred from homology"/>
<dbReference type="EMBL" id="AE003852">
    <property type="protein sequence ID" value="AAF94636.1"/>
    <property type="status" value="ALT_INIT"/>
    <property type="molecule type" value="Genomic_DNA"/>
</dbReference>
<dbReference type="PIR" id="B82194">
    <property type="entry name" value="B82194"/>
</dbReference>
<dbReference type="RefSeq" id="NP_231122.1">
    <property type="nucleotide sequence ID" value="NC_002505.1"/>
</dbReference>
<dbReference type="RefSeq" id="WP_000877146.1">
    <property type="nucleotide sequence ID" value="NZ_LT906614.1"/>
</dbReference>
<dbReference type="SMR" id="Q9KS02"/>
<dbReference type="STRING" id="243277.VC_1481"/>
<dbReference type="DNASU" id="2613987"/>
<dbReference type="EnsemblBacteria" id="AAF94636">
    <property type="protein sequence ID" value="AAF94636"/>
    <property type="gene ID" value="VC_1481"/>
</dbReference>
<dbReference type="GeneID" id="88783657"/>
<dbReference type="KEGG" id="vch:VC_1481"/>
<dbReference type="PATRIC" id="fig|243277.26.peg.1409"/>
<dbReference type="eggNOG" id="COG3120">
    <property type="taxonomic scope" value="Bacteria"/>
</dbReference>
<dbReference type="HOGENOM" id="CLU_142157_0_0_6"/>
<dbReference type="Proteomes" id="UP000000584">
    <property type="component" value="Chromosome 1"/>
</dbReference>
<dbReference type="GO" id="GO:0005737">
    <property type="term" value="C:cytoplasm"/>
    <property type="evidence" value="ECO:0007669"/>
    <property type="project" value="UniProtKB-SubCell"/>
</dbReference>
<dbReference type="GO" id="GO:0043565">
    <property type="term" value="F:sequence-specific DNA binding"/>
    <property type="evidence" value="ECO:0007669"/>
    <property type="project" value="UniProtKB-UniRule"/>
</dbReference>
<dbReference type="GO" id="GO:0051301">
    <property type="term" value="P:cell division"/>
    <property type="evidence" value="ECO:0007669"/>
    <property type="project" value="UniProtKB-UniRule"/>
</dbReference>
<dbReference type="GO" id="GO:0006355">
    <property type="term" value="P:regulation of DNA-templated transcription"/>
    <property type="evidence" value="ECO:0007669"/>
    <property type="project" value="InterPro"/>
</dbReference>
<dbReference type="Gene3D" id="1.20.1270.380">
    <property type="entry name" value="MatP, N-terminal domain"/>
    <property type="match status" value="1"/>
</dbReference>
<dbReference type="Gene3D" id="1.10.1220.10">
    <property type="entry name" value="Met repressor-like"/>
    <property type="match status" value="1"/>
</dbReference>
<dbReference type="HAMAP" id="MF_01073">
    <property type="entry name" value="MatP"/>
    <property type="match status" value="1"/>
</dbReference>
<dbReference type="InterPro" id="IPR013321">
    <property type="entry name" value="Arc_rbn_hlx_hlx"/>
</dbReference>
<dbReference type="InterPro" id="IPR009390">
    <property type="entry name" value="MatP"/>
</dbReference>
<dbReference type="InterPro" id="IPR035375">
    <property type="entry name" value="MatP_C"/>
</dbReference>
<dbReference type="InterPro" id="IPR035087">
    <property type="entry name" value="MatP_N"/>
</dbReference>
<dbReference type="InterPro" id="IPR038339">
    <property type="entry name" value="MatP_N_sf"/>
</dbReference>
<dbReference type="NCBIfam" id="NF003471">
    <property type="entry name" value="PRK05097.1"/>
    <property type="match status" value="1"/>
</dbReference>
<dbReference type="Pfam" id="PF06303">
    <property type="entry name" value="MatP"/>
    <property type="match status" value="1"/>
</dbReference>
<dbReference type="Pfam" id="PF17414">
    <property type="entry name" value="MatP_C"/>
    <property type="match status" value="1"/>
</dbReference>
<accession>Q9KS02</accession>
<comment type="function">
    <text evidence="1">Required for spatial organization of the terminus region of the chromosome (Ter macrodomain) during the cell cycle. Prevents early segregation of duplicated Ter macrodomains during cell division. Binds specifically to matS, which is a 13 bp signature motif repeated within the Ter macrodomain.</text>
</comment>
<comment type="subunit">
    <text evidence="1">Homodimer.</text>
</comment>
<comment type="subcellular location">
    <subcellularLocation>
        <location evidence="1">Cytoplasm</location>
    </subcellularLocation>
</comment>
<comment type="similarity">
    <text evidence="1">Belongs to the MatP family.</text>
</comment>
<comment type="sequence caution" evidence="2">
    <conflict type="erroneous initiation">
        <sequence resource="EMBL-CDS" id="AAF94636"/>
    </conflict>
    <text>Extended N-terminus.</text>
</comment>
<gene>
    <name evidence="1" type="primary">matP</name>
    <name type="ordered locus">VC_1481</name>
</gene>